<proteinExistence type="evidence at transcript level"/>
<gene>
    <name evidence="1" type="primary">cfap299</name>
</gene>
<protein>
    <recommendedName>
        <fullName evidence="3">Cilia- and flagella-associated protein 299</fullName>
    </recommendedName>
</protein>
<evidence type="ECO:0000250" key="1">
    <source>
        <dbReference type="UniProtKB" id="Q6V702"/>
    </source>
</evidence>
<evidence type="ECO:0000250" key="2">
    <source>
        <dbReference type="UniProtKB" id="Q810M1"/>
    </source>
</evidence>
<evidence type="ECO:0000305" key="3"/>
<name>CF299_XENLA</name>
<dbReference type="EMBL" id="BC087372">
    <property type="protein sequence ID" value="AAH87372.1"/>
    <property type="molecule type" value="mRNA"/>
</dbReference>
<dbReference type="SMR" id="Q5PQ44"/>
<dbReference type="DNASU" id="495986"/>
<dbReference type="GeneID" id="495986"/>
<dbReference type="KEGG" id="xla:495986"/>
<dbReference type="AGR" id="Xenbase:XB-GENE-984384"/>
<dbReference type="CTD" id="495986"/>
<dbReference type="Xenbase" id="XB-GENE-984384">
    <property type="gene designation" value="cfap299.L"/>
</dbReference>
<dbReference type="OrthoDB" id="2136125at2759"/>
<dbReference type="Proteomes" id="UP000186698">
    <property type="component" value="Chromosome 1L"/>
</dbReference>
<dbReference type="Bgee" id="495986">
    <property type="expression patterns" value="Expressed in testis and 15 other cell types or tissues"/>
</dbReference>
<dbReference type="GO" id="GO:0005737">
    <property type="term" value="C:cytoplasm"/>
    <property type="evidence" value="ECO:0000250"/>
    <property type="project" value="UniProtKB"/>
</dbReference>
<dbReference type="GO" id="GO:0005634">
    <property type="term" value="C:nucleus"/>
    <property type="evidence" value="ECO:0007669"/>
    <property type="project" value="UniProtKB-SubCell"/>
</dbReference>
<dbReference type="InterPro" id="IPR027887">
    <property type="entry name" value="DUF4464"/>
</dbReference>
<dbReference type="PANTHER" id="PTHR33588">
    <property type="entry name" value="CILIA- AND FLAGELLA-ASSOCIATED PROTEIN 299"/>
    <property type="match status" value="1"/>
</dbReference>
<dbReference type="PANTHER" id="PTHR33588:SF1">
    <property type="entry name" value="CILIA- AND FLAGELLA-ASSOCIATED PROTEIN 299"/>
    <property type="match status" value="1"/>
</dbReference>
<dbReference type="Pfam" id="PF14713">
    <property type="entry name" value="DUF4464"/>
    <property type="match status" value="1"/>
</dbReference>
<reference key="1">
    <citation type="submission" date="2004-12" db="EMBL/GenBank/DDBJ databases">
        <authorList>
            <consortium name="NIH - Xenopus Gene Collection (XGC) project"/>
        </authorList>
    </citation>
    <scope>NUCLEOTIDE SEQUENCE [LARGE SCALE MRNA]</scope>
    <source>
        <tissue>Testis</tissue>
    </source>
</reference>
<keyword id="KW-0963">Cytoplasm</keyword>
<keyword id="KW-0539">Nucleus</keyword>
<keyword id="KW-1185">Reference proteome</keyword>
<sequence>MEQSEAGSAADSIITQFNTYEDFLDSQITALDLHYLEDEELARQLVELGYRGSGEVLKRDEFEARKAAAEASRLSQRTQQKTLSSAGKDPKDNFLKALAMREEANRNGKMTSVIFIRDKNAHGQEVSGYIDFAHRLKTEDFEVYFSGKKKLLPRPTDLSFYNWESHVSTSNPSPNYQVIAETSSGLLFKNKRDRKILNVDPKASPGDNSTRTSIQTDIYIQAVIYDHITRRKS</sequence>
<accession>Q5PQ44</accession>
<organism>
    <name type="scientific">Xenopus laevis</name>
    <name type="common">African clawed frog</name>
    <dbReference type="NCBI Taxonomy" id="8355"/>
    <lineage>
        <taxon>Eukaryota</taxon>
        <taxon>Metazoa</taxon>
        <taxon>Chordata</taxon>
        <taxon>Craniata</taxon>
        <taxon>Vertebrata</taxon>
        <taxon>Euteleostomi</taxon>
        <taxon>Amphibia</taxon>
        <taxon>Batrachia</taxon>
        <taxon>Anura</taxon>
        <taxon>Pipoidea</taxon>
        <taxon>Pipidae</taxon>
        <taxon>Xenopodinae</taxon>
        <taxon>Xenopus</taxon>
        <taxon>Xenopus</taxon>
    </lineage>
</organism>
<comment type="function">
    <text evidence="2">May be involved in spermatogenesis.</text>
</comment>
<comment type="subcellular location">
    <subcellularLocation>
        <location evidence="2">Cytoplasm</location>
    </subcellularLocation>
    <subcellularLocation>
        <location evidence="2">Nucleus</location>
    </subcellularLocation>
    <text evidence="2">Mainly cytoplasmic.</text>
</comment>
<feature type="chain" id="PRO_0000301958" description="Cilia- and flagella-associated protein 299">
    <location>
        <begin position="1"/>
        <end position="233"/>
    </location>
</feature>